<dbReference type="EC" id="2.1.1.-"/>
<dbReference type="EMBL" id="CP000480">
    <property type="protein sequence ID" value="ABK69783.1"/>
    <property type="molecule type" value="Genomic_DNA"/>
</dbReference>
<dbReference type="EMBL" id="CP001663">
    <property type="protein sequence ID" value="AFP36574.1"/>
    <property type="molecule type" value="Genomic_DNA"/>
</dbReference>
<dbReference type="RefSeq" id="WP_011726662.1">
    <property type="nucleotide sequence ID" value="NZ_SIJM01000048.1"/>
</dbReference>
<dbReference type="RefSeq" id="YP_884510.1">
    <property type="nucleotide sequence ID" value="NC_008596.1"/>
</dbReference>
<dbReference type="SMR" id="A0QNM2"/>
<dbReference type="STRING" id="246196.MSMEG_0095"/>
<dbReference type="PaxDb" id="246196-MSMEI_0092"/>
<dbReference type="KEGG" id="msb:LJ00_00475"/>
<dbReference type="KEGG" id="msg:MSMEI_0092"/>
<dbReference type="KEGG" id="msm:MSMEG_0095"/>
<dbReference type="PATRIC" id="fig|246196.19.peg.92"/>
<dbReference type="eggNOG" id="COG3315">
    <property type="taxonomic scope" value="Bacteria"/>
</dbReference>
<dbReference type="OrthoDB" id="9806164at2"/>
<dbReference type="Proteomes" id="UP000000757">
    <property type="component" value="Chromosome"/>
</dbReference>
<dbReference type="Proteomes" id="UP000006158">
    <property type="component" value="Chromosome"/>
</dbReference>
<dbReference type="GO" id="GO:0008168">
    <property type="term" value="F:methyltransferase activity"/>
    <property type="evidence" value="ECO:0007669"/>
    <property type="project" value="UniProtKB-KW"/>
</dbReference>
<dbReference type="GO" id="GO:0032259">
    <property type="term" value="P:methylation"/>
    <property type="evidence" value="ECO:0007669"/>
    <property type="project" value="UniProtKB-KW"/>
</dbReference>
<dbReference type="FunFam" id="3.40.50.150:FF:000152">
    <property type="entry name" value="S-adenosyl-L-methionine-dependent methyltransferase"/>
    <property type="match status" value="1"/>
</dbReference>
<dbReference type="Gene3D" id="3.40.50.150">
    <property type="entry name" value="Vaccinia Virus protein VP39"/>
    <property type="match status" value="1"/>
</dbReference>
<dbReference type="InterPro" id="IPR007213">
    <property type="entry name" value="Ppm1/Ppm2/Tcmp"/>
</dbReference>
<dbReference type="InterPro" id="IPR029063">
    <property type="entry name" value="SAM-dependent_MTases_sf"/>
</dbReference>
<dbReference type="InterPro" id="IPR011610">
    <property type="entry name" value="SAM_mthyl_Trfase_ML2640-like"/>
</dbReference>
<dbReference type="NCBIfam" id="TIGR00027">
    <property type="entry name" value="mthyl_TIGR00027"/>
    <property type="match status" value="1"/>
</dbReference>
<dbReference type="PANTHER" id="PTHR43619">
    <property type="entry name" value="S-ADENOSYL-L-METHIONINE-DEPENDENT METHYLTRANSFERASE YKTD-RELATED"/>
    <property type="match status" value="1"/>
</dbReference>
<dbReference type="PANTHER" id="PTHR43619:SF2">
    <property type="entry name" value="S-ADENOSYL-L-METHIONINE-DEPENDENT METHYLTRANSFERASES SUPERFAMILY PROTEIN"/>
    <property type="match status" value="1"/>
</dbReference>
<dbReference type="Pfam" id="PF04072">
    <property type="entry name" value="LCM"/>
    <property type="match status" value="1"/>
</dbReference>
<dbReference type="SUPFAM" id="SSF53335">
    <property type="entry name" value="S-adenosyl-L-methionine-dependent methyltransferases"/>
    <property type="match status" value="1"/>
</dbReference>
<organism>
    <name type="scientific">Mycolicibacterium smegmatis (strain ATCC 700084 / mc(2)155)</name>
    <name type="common">Mycobacterium smegmatis</name>
    <dbReference type="NCBI Taxonomy" id="246196"/>
    <lineage>
        <taxon>Bacteria</taxon>
        <taxon>Bacillati</taxon>
        <taxon>Actinomycetota</taxon>
        <taxon>Actinomycetes</taxon>
        <taxon>Mycobacteriales</taxon>
        <taxon>Mycobacteriaceae</taxon>
        <taxon>Mycolicibacterium</taxon>
    </lineage>
</organism>
<evidence type="ECO:0000250" key="1"/>
<evidence type="ECO:0000305" key="2"/>
<keyword id="KW-0489">Methyltransferase</keyword>
<keyword id="KW-1185">Reference proteome</keyword>
<keyword id="KW-0949">S-adenosyl-L-methionine</keyword>
<keyword id="KW-0808">Transferase</keyword>
<proteinExistence type="inferred from homology"/>
<comment type="function">
    <text evidence="1">Exhibits S-adenosyl-L-methionine-dependent methyltransferase activity.</text>
</comment>
<comment type="similarity">
    <text evidence="2">Belongs to the UPF0677 family.</text>
</comment>
<feature type="chain" id="PRO_0000361194" description="Putative S-adenosyl-L-methionine-dependent methyltransferase MSMEG_0095/MSMEI_0092">
    <location>
        <begin position="1"/>
        <end position="311"/>
    </location>
</feature>
<feature type="binding site" evidence="1">
    <location>
        <position position="134"/>
    </location>
    <ligand>
        <name>S-adenosyl-L-methionine</name>
        <dbReference type="ChEBI" id="CHEBI:59789"/>
    </ligand>
</feature>
<feature type="binding site" evidence="1">
    <location>
        <begin position="163"/>
        <end position="164"/>
    </location>
    <ligand>
        <name>S-adenosyl-L-methionine</name>
        <dbReference type="ChEBI" id="CHEBI:59789"/>
    </ligand>
</feature>
<sequence length="311" mass="34557">MSSLRTDDDTWDIATSVGSTAVMVAAARAGETERDDALIRDPYAKILVAGAGTGVWETVLDSEFAAKIENLDPEAAAIFAHMGNYQAVRTHFFDAYYREAADAGIRQIVILASGLDSRAYRLDWPAGTTVYEIDQPKVLEYKSATLREHGIEPVAQRREVPVDLRFDWPTALHDAGFDASLPTAWLAEGLLMYLPAEAQDRLFELVTELSAPGSRIAVETAGVAATDRREAMRERFKKFADQLNLSSALDIQELVYDDPDRADVAEWLDAHGWRARGVHALDEMRRLDRLVELPDDPDRAAFSTFVTAQRL</sequence>
<reference key="1">
    <citation type="submission" date="2006-10" db="EMBL/GenBank/DDBJ databases">
        <authorList>
            <person name="Fleischmann R.D."/>
            <person name="Dodson R.J."/>
            <person name="Haft D.H."/>
            <person name="Merkel J.S."/>
            <person name="Nelson W.C."/>
            <person name="Fraser C.M."/>
        </authorList>
    </citation>
    <scope>NUCLEOTIDE SEQUENCE [LARGE SCALE GENOMIC DNA]</scope>
    <source>
        <strain>ATCC 700084 / mc(2)155</strain>
    </source>
</reference>
<reference key="2">
    <citation type="journal article" date="2007" name="Genome Biol.">
        <title>Interrupted coding sequences in Mycobacterium smegmatis: authentic mutations or sequencing errors?</title>
        <authorList>
            <person name="Deshayes C."/>
            <person name="Perrodou E."/>
            <person name="Gallien S."/>
            <person name="Euphrasie D."/>
            <person name="Schaeffer C."/>
            <person name="Van-Dorsselaer A."/>
            <person name="Poch O."/>
            <person name="Lecompte O."/>
            <person name="Reyrat J.-M."/>
        </authorList>
    </citation>
    <scope>NUCLEOTIDE SEQUENCE [LARGE SCALE GENOMIC DNA]</scope>
    <source>
        <strain>ATCC 700084 / mc(2)155</strain>
    </source>
</reference>
<reference key="3">
    <citation type="journal article" date="2009" name="Genome Res.">
        <title>Ortho-proteogenomics: multiple proteomes investigation through orthology and a new MS-based protocol.</title>
        <authorList>
            <person name="Gallien S."/>
            <person name="Perrodou E."/>
            <person name="Carapito C."/>
            <person name="Deshayes C."/>
            <person name="Reyrat J.-M."/>
            <person name="Van Dorsselaer A."/>
            <person name="Poch O."/>
            <person name="Schaeffer C."/>
            <person name="Lecompte O."/>
        </authorList>
    </citation>
    <scope>NUCLEOTIDE SEQUENCE [LARGE SCALE GENOMIC DNA]</scope>
    <source>
        <strain>ATCC 700084 / mc(2)155</strain>
    </source>
</reference>
<name>Y095_MYCS2</name>
<gene>
    <name type="ordered locus">MSMEG_0095</name>
    <name type="ordered locus">MSMEI_0092</name>
</gene>
<protein>
    <recommendedName>
        <fullName>Putative S-adenosyl-L-methionine-dependent methyltransferase MSMEG_0095/MSMEI_0092</fullName>
        <ecNumber>2.1.1.-</ecNumber>
    </recommendedName>
</protein>
<accession>A0QNM2</accession>
<accession>I7G2G5</accession>